<keyword id="KW-0150">Chloroplast</keyword>
<keyword id="KW-0472">Membrane</keyword>
<keyword id="KW-0602">Photosynthesis</keyword>
<keyword id="KW-0604">Photosystem II</keyword>
<keyword id="KW-0934">Plastid</keyword>
<keyword id="KW-0674">Reaction center</keyword>
<keyword id="KW-0793">Thylakoid</keyword>
<keyword id="KW-0812">Transmembrane</keyword>
<keyword id="KW-1133">Transmembrane helix</keyword>
<name>PSBM_PHAAO</name>
<feature type="chain" id="PRO_0000276250" description="Photosystem II reaction center protein M">
    <location>
        <begin position="1"/>
        <end position="34"/>
    </location>
</feature>
<feature type="transmembrane region" description="Helical" evidence="1">
    <location>
        <begin position="5"/>
        <end position="25"/>
    </location>
</feature>
<geneLocation type="chloroplast"/>
<organism>
    <name type="scientific">Phalaenopsis aphrodite subsp. formosana</name>
    <name type="common">Moth orchid</name>
    <dbReference type="NCBI Taxonomy" id="308872"/>
    <lineage>
        <taxon>Eukaryota</taxon>
        <taxon>Viridiplantae</taxon>
        <taxon>Streptophyta</taxon>
        <taxon>Embryophyta</taxon>
        <taxon>Tracheophyta</taxon>
        <taxon>Spermatophyta</taxon>
        <taxon>Magnoliopsida</taxon>
        <taxon>Liliopsida</taxon>
        <taxon>Asparagales</taxon>
        <taxon>Orchidaceae</taxon>
        <taxon>Epidendroideae</taxon>
        <taxon>Vandeae</taxon>
        <taxon>Aeridinae</taxon>
        <taxon>Phalaenopsis</taxon>
    </lineage>
</organism>
<sequence>MEVNILAFIATALFILVPTAFLLIIYVKTVSQND</sequence>
<evidence type="ECO:0000255" key="1">
    <source>
        <dbReference type="HAMAP-Rule" id="MF_00438"/>
    </source>
</evidence>
<protein>
    <recommendedName>
        <fullName evidence="1">Photosystem II reaction center protein M</fullName>
        <shortName evidence="1">PSII-M</shortName>
    </recommendedName>
</protein>
<dbReference type="EMBL" id="AY916449">
    <property type="protein sequence ID" value="AAW82497.1"/>
    <property type="molecule type" value="Genomic_DNA"/>
</dbReference>
<dbReference type="RefSeq" id="YP_358572.1">
    <property type="nucleotide sequence ID" value="NC_007499.1"/>
</dbReference>
<dbReference type="SMR" id="Q3BAP6"/>
<dbReference type="GeneID" id="3741648"/>
<dbReference type="GO" id="GO:0009535">
    <property type="term" value="C:chloroplast thylakoid membrane"/>
    <property type="evidence" value="ECO:0007669"/>
    <property type="project" value="UniProtKB-SubCell"/>
</dbReference>
<dbReference type="GO" id="GO:0009523">
    <property type="term" value="C:photosystem II"/>
    <property type="evidence" value="ECO:0007669"/>
    <property type="project" value="UniProtKB-KW"/>
</dbReference>
<dbReference type="GO" id="GO:0019684">
    <property type="term" value="P:photosynthesis, light reaction"/>
    <property type="evidence" value="ECO:0007669"/>
    <property type="project" value="InterPro"/>
</dbReference>
<dbReference type="HAMAP" id="MF_00438">
    <property type="entry name" value="PSII_PsbM"/>
    <property type="match status" value="1"/>
</dbReference>
<dbReference type="InterPro" id="IPR007826">
    <property type="entry name" value="PSII_PsbM"/>
</dbReference>
<dbReference type="InterPro" id="IPR037269">
    <property type="entry name" value="PSII_PsbM_sf"/>
</dbReference>
<dbReference type="NCBIfam" id="TIGR03038">
    <property type="entry name" value="PS_II_psbM"/>
    <property type="match status" value="1"/>
</dbReference>
<dbReference type="PANTHER" id="PTHR35774">
    <property type="entry name" value="PHOTOSYSTEM II REACTION CENTER PROTEIN M"/>
    <property type="match status" value="1"/>
</dbReference>
<dbReference type="PANTHER" id="PTHR35774:SF1">
    <property type="entry name" value="PHOTOSYSTEM II REACTION CENTER PROTEIN M"/>
    <property type="match status" value="1"/>
</dbReference>
<dbReference type="Pfam" id="PF05151">
    <property type="entry name" value="PsbM"/>
    <property type="match status" value="1"/>
</dbReference>
<dbReference type="SUPFAM" id="SSF161033">
    <property type="entry name" value="Photosystem II reaction center protein M, PsbM"/>
    <property type="match status" value="1"/>
</dbReference>
<proteinExistence type="inferred from homology"/>
<accession>Q3BAP6</accession>
<reference key="1">
    <citation type="journal article" date="2006" name="Mol. Biol. Evol.">
        <title>The chloroplast genome of Phalaenopsis aphrodite (Orchidaceae): comparative analysis of evolutionary rate with that of grasses and its phylogenetic implications.</title>
        <authorList>
            <person name="Chang C.-C."/>
            <person name="Lin H.-C."/>
            <person name="Lin I.-P."/>
            <person name="Chow T.-Y."/>
            <person name="Chen H.-H."/>
            <person name="Chen W.-H."/>
            <person name="Cheng C.-H."/>
            <person name="Lin C.-Y."/>
            <person name="Liu S.-M."/>
            <person name="Chang C.-C."/>
            <person name="Chaw S.-M."/>
        </authorList>
    </citation>
    <scope>NUCLEOTIDE SEQUENCE [LARGE SCALE GENOMIC DNA]</scope>
    <source>
        <strain>cv. Taisugar TS-97</strain>
    </source>
</reference>
<comment type="function">
    <text evidence="1">One of the components of the core complex of photosystem II (PSII). PSII is a light-driven water:plastoquinone oxidoreductase that uses light energy to abstract electrons from H(2)O, generating O(2) and a proton gradient subsequently used for ATP formation. It consists of a core antenna complex that captures photons, and an electron transfer chain that converts photonic excitation into a charge separation. This subunit is found at the monomer-monomer interface.</text>
</comment>
<comment type="subunit">
    <text evidence="1">PSII is composed of 1 copy each of membrane proteins PsbA, PsbB, PsbC, PsbD, PsbE, PsbF, PsbH, PsbI, PsbJ, PsbK, PsbL, PsbM, PsbT, PsbX, PsbY, PsbZ, Psb30/Ycf12, at least 3 peripheral proteins of the oxygen-evolving complex and a large number of cofactors. It forms dimeric complexes.</text>
</comment>
<comment type="subcellular location">
    <subcellularLocation>
        <location evidence="1">Plastid</location>
        <location evidence="1">Chloroplast thylakoid membrane</location>
        <topology evidence="1">Single-pass membrane protein</topology>
    </subcellularLocation>
</comment>
<comment type="similarity">
    <text evidence="1">Belongs to the PsbM family.</text>
</comment>
<gene>
    <name evidence="1" type="primary">psbM</name>
</gene>